<name>RECG_ARATH</name>
<feature type="transit peptide" description="Chloroplast and mitochondrion" evidence="8">
    <location>
        <begin position="1"/>
        <end status="unknown"/>
    </location>
</feature>
<feature type="chain" id="PRO_0000435302" description="ATP-dependent DNA helicase homolog RECG1, chloroplastic/mitochondrial">
    <location>
        <begin status="unknown"/>
        <end position="973"/>
    </location>
</feature>
<feature type="domain" description="Helicase ATP-binding" evidence="2">
    <location>
        <begin position="536"/>
        <end position="725"/>
    </location>
</feature>
<feature type="domain" description="Helicase C-terminal" evidence="3">
    <location>
        <begin position="746"/>
        <end position="904"/>
    </location>
</feature>
<feature type="region of interest" description="Sufficient for chloroplastic and mitochondrial trgeting" evidence="5">
    <location>
        <begin position="1"/>
        <end position="208"/>
    </location>
</feature>
<feature type="region of interest" description="Disordered" evidence="4">
    <location>
        <begin position="174"/>
        <end position="200"/>
    </location>
</feature>
<feature type="short sequence motif" description="DEQQ box" evidence="7">
    <location>
        <begin position="655"/>
        <end position="658"/>
    </location>
</feature>
<feature type="binding site" evidence="2">
    <location>
        <begin position="549"/>
        <end position="556"/>
    </location>
    <ligand>
        <name>ATP</name>
        <dbReference type="ChEBI" id="CHEBI:30616"/>
    </ligand>
</feature>
<gene>
    <name evidence="6" type="primary">RECG1</name>
    <name evidence="9" type="ordered locus">At2g01440</name>
    <name evidence="10" type="ORF">F2I9.6</name>
</gene>
<comment type="function">
    <text evidence="1">Plays a critical role in recombination and DNA repair. Helps process Holliday junction (HJ) intermediates to mature products by catalyzing branch migration. Has replication fork regression activity, unwinds stalled or blocked replication forks to make a HJ that can be resolved. Has a DNA unwinding activity characteristic of a DNA helicase with 3'-5' polarity (By similarity).</text>
</comment>
<comment type="function">
    <text evidence="1 5">Plays a role in recombination surveillance and repair of double-stranded (ds)DNA breaks in the mitochondrion (PubMed:26462909). May be able to dissociate D- and R-loops (Probable) (PubMed:26462909). Able to complement UV sensitivity of a recG deletion in E.coli (PubMed:26462909).</text>
</comment>
<comment type="catalytic activity">
    <reaction evidence="1">
        <text>Couples ATP hydrolysis with the unwinding of duplex DNA by translocating in the 3'-5' direction.</text>
        <dbReference type="EC" id="5.6.2.4"/>
    </reaction>
</comment>
<comment type="catalytic activity">
    <reaction evidence="1">
        <text>ATP + H2O = ADP + phosphate + H(+)</text>
        <dbReference type="Rhea" id="RHEA:13065"/>
        <dbReference type="ChEBI" id="CHEBI:15377"/>
        <dbReference type="ChEBI" id="CHEBI:15378"/>
        <dbReference type="ChEBI" id="CHEBI:30616"/>
        <dbReference type="ChEBI" id="CHEBI:43474"/>
        <dbReference type="ChEBI" id="CHEBI:456216"/>
        <dbReference type="EC" id="5.6.2.4"/>
    </reaction>
</comment>
<comment type="subcellular location">
    <subcellularLocation>
        <location evidence="5">Plastid</location>
        <location evidence="5">Chloroplast</location>
    </subcellularLocation>
    <subcellularLocation>
        <location evidence="5">Mitochondrion</location>
    </subcellularLocation>
</comment>
<comment type="tissue specificity">
    <text evidence="5">Expressed in most tissues, not seen in pollen, ovules or developing seeds (PubMed:26462909).</text>
</comment>
<comment type="developmental stage">
    <text evidence="5">Active in all developmental stages (at protein level) (PubMed:26462909).</text>
</comment>
<comment type="domain">
    <text evidence="5">The first 208 codons are able target to both the chloroplast and mitochondrion (PubMed:26462909).</text>
</comment>
<comment type="disruption phenotype">
    <text evidence="5">No visible phenotype under normal growth conditions (PubMed:26462909). After treatment with the gyrase inhibitor ciprofloxacin (CIP), the usual increase in mitochondrial inverted repeat crossover products was significantly lower (PubMed:26462909). No change in chloroplast DNA after CIP treatment (PubMed:26462909).</text>
</comment>
<comment type="similarity">
    <text evidence="7">Belongs to the helicase family. RecG subfamily.</text>
</comment>
<comment type="sequence caution" evidence="7">
    <conflict type="erroneous gene model prediction">
        <sequence resource="EMBL-CDS" id="AAC67321"/>
    </conflict>
</comment>
<protein>
    <recommendedName>
        <fullName evidence="6">ATP-dependent DNA helicase homolog RECG1, chloroplastic/mitochondrial</fullName>
        <ecNumber evidence="1">5.6.2.4</ecNumber>
    </recommendedName>
    <alternativeName>
        <fullName evidence="7">DNA 3'-5' helicase RECG1</fullName>
    </alternativeName>
</protein>
<proteinExistence type="evidence at protein level"/>
<sequence>MAAVTLSPCSMCCGSRRLRSVIVIQAQRGNWNRIRLSNFFFSKVWNISYRSKHKYSDNLLEQVEKYASARLENQSKLITKVAALMECDNVDDFIDKKSDEQVKKDLVLACKRFPSIILGDSRPVELYSNSKSYGESSSILKTPTDNSFLPTPMHGGWFDPDNLSRTLSSFCPELLQNDDSSDPREDILDDGSSFTSKTATSEVEATSDDVFAAQRFLATSIDSMPGLSKRHSNQLDSCGFHTMKKLLHHFPRTYADLQNAQVDIEDGQYLIFVGKVLSSKGVRASSSFSFLEVIVSCEVSGRDRTPEDLSHNAEDKAGKSIFLHLKKFFRGTRFTWQPFLNSIQEKHKVGDLVCISGKVKSLRAEDHFEMREYNIDVLKDEEESSHRAQGRPYPIYPSKGGLNPKFLSDVISRALRVLPANMDPIPKEITKVFGLPSLNDAYVGIHEPKTLDEADLARKRLIFDEFFYLQLARLYQMLQSLGTKIEKDVLLEKFRKPVLNSVYIEEWSTLTKSFLKALPYSLTPSQLSAVSEIIWDLKRPVPMNRLLQGDVGCGKTVVAFLACMEVIGSGYQAAFMAPTELLAIQHYEQCRDLLENMEGVSSKPTIGLLTGSTPAKQSRMIRQDLQSGAISFIIGTHSLIAEKIEYSALRIAVVDEQQRFGVIQRGKFNSKLYGTSMISKSGSSDSDDTSKADLSMAPHVLAMSATPIPRSLALALYGDISLTQITGMPLGRIPVETHIFEGNETGIKEVYSMMLEDLKSGGRVYVVYPVIDQSEQLPQLRAASAELEIVTKKFPKYNCGLLHGRMKSDDKEEALNKFRSGETQILLSTQVIEIGVDVPDASMMVVMNAERFGIAQLHQLRGRVGRGTRKSKCLLVGSSTNSLKRLNMLGKSSDGFYLANIDLLLRGPGDLLGKKQSGHLPEFPVARLEIDGNMLQEAHIAALNVLGDSHDLEKFPALKAELSMRQPLCLLGD</sequence>
<accession>F4INA9</accession>
<accession>Q9ZVG0</accession>
<reference key="1">
    <citation type="journal article" date="1999" name="Nature">
        <title>Sequence and analysis of chromosome 2 of the plant Arabidopsis thaliana.</title>
        <authorList>
            <person name="Lin X."/>
            <person name="Kaul S."/>
            <person name="Rounsley S.D."/>
            <person name="Shea T.P."/>
            <person name="Benito M.-I."/>
            <person name="Town C.D."/>
            <person name="Fujii C.Y."/>
            <person name="Mason T.M."/>
            <person name="Bowman C.L."/>
            <person name="Barnstead M.E."/>
            <person name="Feldblyum T.V."/>
            <person name="Buell C.R."/>
            <person name="Ketchum K.A."/>
            <person name="Lee J.J."/>
            <person name="Ronning C.M."/>
            <person name="Koo H.L."/>
            <person name="Moffat K.S."/>
            <person name="Cronin L.A."/>
            <person name="Shen M."/>
            <person name="Pai G."/>
            <person name="Van Aken S."/>
            <person name="Umayam L."/>
            <person name="Tallon L.J."/>
            <person name="Gill J.E."/>
            <person name="Adams M.D."/>
            <person name="Carrera A.J."/>
            <person name="Creasy T.H."/>
            <person name="Goodman H.M."/>
            <person name="Somerville C.R."/>
            <person name="Copenhaver G.P."/>
            <person name="Preuss D."/>
            <person name="Nierman W.C."/>
            <person name="White O."/>
            <person name="Eisen J.A."/>
            <person name="Salzberg S.L."/>
            <person name="Fraser C.M."/>
            <person name="Venter J.C."/>
        </authorList>
    </citation>
    <scope>NUCLEOTIDE SEQUENCE [LARGE SCALE GENOMIC DNA]</scope>
    <source>
        <strain>cv. Columbia</strain>
    </source>
</reference>
<reference key="2">
    <citation type="journal article" date="2017" name="Plant J.">
        <title>Araport11: a complete reannotation of the Arabidopsis thaliana reference genome.</title>
        <authorList>
            <person name="Cheng C.Y."/>
            <person name="Krishnakumar V."/>
            <person name="Chan A.P."/>
            <person name="Thibaud-Nissen F."/>
            <person name="Schobel S."/>
            <person name="Town C.D."/>
        </authorList>
    </citation>
    <scope>GENOME REANNOTATION</scope>
    <source>
        <strain>cv. Columbia</strain>
    </source>
</reference>
<reference key="3">
    <citation type="journal article" date="2013" name="PLoS ONE">
        <title>Genome-wide comparative in silico analysis of the RNA helicase gene family in Zea mays and Glycine max: a comparison with Arabidopsis and Oryza sativa.</title>
        <authorList>
            <person name="Xu R."/>
            <person name="Zhang S."/>
            <person name="Huang J."/>
            <person name="Zheng C."/>
        </authorList>
    </citation>
    <scope>GENE FAMILY</scope>
</reference>
<reference key="4">
    <citation type="journal article" date="2015" name="Plant Cell">
        <title>The RECG1 DNA Translocase Is a Key Factor in Recombination Surveillance, Repair, and Segregation of the Mitochondrial DNA in Arabidopsis.</title>
        <authorList>
            <person name="Wallet C."/>
            <person name="Le Ret M."/>
            <person name="Bergdoll M."/>
            <person name="Bichara M."/>
            <person name="Dietrich A."/>
            <person name="Gualberto J.M."/>
        </authorList>
    </citation>
    <scope>FUNCTION</scope>
    <scope>SUBCELLULAR LOCATION</scope>
    <scope>TISSUE SPECIFICITY</scope>
    <scope>DEVELOPMENTAL STAGE</scope>
    <scope>DOMAIN</scope>
    <scope>DISRUPTION PHENOTYPE</scope>
    <source>
        <strain>cv. Columbia</strain>
        <strain>cv. Wassilewskija</strain>
    </source>
</reference>
<organism>
    <name type="scientific">Arabidopsis thaliana</name>
    <name type="common">Mouse-ear cress</name>
    <dbReference type="NCBI Taxonomy" id="3702"/>
    <lineage>
        <taxon>Eukaryota</taxon>
        <taxon>Viridiplantae</taxon>
        <taxon>Streptophyta</taxon>
        <taxon>Embryophyta</taxon>
        <taxon>Tracheophyta</taxon>
        <taxon>Spermatophyta</taxon>
        <taxon>Magnoliopsida</taxon>
        <taxon>eudicotyledons</taxon>
        <taxon>Gunneridae</taxon>
        <taxon>Pentapetalae</taxon>
        <taxon>rosids</taxon>
        <taxon>malvids</taxon>
        <taxon>Brassicales</taxon>
        <taxon>Brassicaceae</taxon>
        <taxon>Camelineae</taxon>
        <taxon>Arabidopsis</taxon>
    </lineage>
</organism>
<keyword id="KW-0067">ATP-binding</keyword>
<keyword id="KW-0150">Chloroplast</keyword>
<keyword id="KW-0227">DNA damage</keyword>
<keyword id="KW-0233">DNA recombination</keyword>
<keyword id="KW-0234">DNA repair</keyword>
<keyword id="KW-0238">DNA-binding</keyword>
<keyword id="KW-0347">Helicase</keyword>
<keyword id="KW-0378">Hydrolase</keyword>
<keyword id="KW-0413">Isomerase</keyword>
<keyword id="KW-0496">Mitochondrion</keyword>
<keyword id="KW-0547">Nucleotide-binding</keyword>
<keyword id="KW-0934">Plastid</keyword>
<keyword id="KW-1185">Reference proteome</keyword>
<keyword id="KW-0809">Transit peptide</keyword>
<evidence type="ECO:0000250" key="1">
    <source>
        <dbReference type="UniProtKB" id="P24230"/>
    </source>
</evidence>
<evidence type="ECO:0000255" key="2">
    <source>
        <dbReference type="PROSITE-ProRule" id="PRU00541"/>
    </source>
</evidence>
<evidence type="ECO:0000255" key="3">
    <source>
        <dbReference type="PROSITE-ProRule" id="PRU00542"/>
    </source>
</evidence>
<evidence type="ECO:0000256" key="4">
    <source>
        <dbReference type="SAM" id="MobiDB-lite"/>
    </source>
</evidence>
<evidence type="ECO:0000269" key="5">
    <source>
    </source>
</evidence>
<evidence type="ECO:0000303" key="6">
    <source>
    </source>
</evidence>
<evidence type="ECO:0000305" key="7"/>
<evidence type="ECO:0000305" key="8">
    <source>
    </source>
</evidence>
<evidence type="ECO:0000312" key="9">
    <source>
        <dbReference type="Araport" id="AT2G01440"/>
    </source>
</evidence>
<evidence type="ECO:0000312" key="10">
    <source>
        <dbReference type="EMBL" id="AAC67321.1"/>
    </source>
</evidence>
<dbReference type="EC" id="5.6.2.4" evidence="1"/>
<dbReference type="EMBL" id="AC005560">
    <property type="protein sequence ID" value="AAC67321.1"/>
    <property type="status" value="ALT_SEQ"/>
    <property type="molecule type" value="Genomic_DNA"/>
</dbReference>
<dbReference type="EMBL" id="CP002685">
    <property type="protein sequence ID" value="AEC05451.1"/>
    <property type="molecule type" value="Genomic_DNA"/>
</dbReference>
<dbReference type="PIR" id="G84424">
    <property type="entry name" value="G84424"/>
</dbReference>
<dbReference type="RefSeq" id="NP_178253.3">
    <property type="nucleotide sequence ID" value="NM_126205.4"/>
</dbReference>
<dbReference type="SMR" id="F4INA9"/>
<dbReference type="FunCoup" id="F4INA9">
    <property type="interactions" value="208"/>
</dbReference>
<dbReference type="STRING" id="3702.F4INA9"/>
<dbReference type="iPTMnet" id="F4INA9"/>
<dbReference type="PaxDb" id="3702-AT2G01440.1"/>
<dbReference type="ProteomicsDB" id="225962"/>
<dbReference type="EnsemblPlants" id="AT2G01440.1">
    <property type="protein sequence ID" value="AT2G01440.1"/>
    <property type="gene ID" value="AT2G01440"/>
</dbReference>
<dbReference type="GeneID" id="814672"/>
<dbReference type="Gramene" id="AT2G01440.1">
    <property type="protein sequence ID" value="AT2G01440.1"/>
    <property type="gene ID" value="AT2G01440"/>
</dbReference>
<dbReference type="KEGG" id="ath:AT2G01440"/>
<dbReference type="Araport" id="AT2G01440"/>
<dbReference type="TAIR" id="AT2G01440">
    <property type="gene designation" value="RECG"/>
</dbReference>
<dbReference type="eggNOG" id="KOG0344">
    <property type="taxonomic scope" value="Eukaryota"/>
</dbReference>
<dbReference type="HOGENOM" id="CLU_005122_7_2_1"/>
<dbReference type="InParanoid" id="F4INA9"/>
<dbReference type="OMA" id="GQYLIFI"/>
<dbReference type="PRO" id="PR:F4INA9"/>
<dbReference type="Proteomes" id="UP000006548">
    <property type="component" value="Chromosome 2"/>
</dbReference>
<dbReference type="ExpressionAtlas" id="F4INA9">
    <property type="expression patterns" value="baseline and differential"/>
</dbReference>
<dbReference type="GO" id="GO:0009507">
    <property type="term" value="C:chloroplast"/>
    <property type="evidence" value="ECO:0000314"/>
    <property type="project" value="TAIR"/>
</dbReference>
<dbReference type="GO" id="GO:0005739">
    <property type="term" value="C:mitochondrion"/>
    <property type="evidence" value="ECO:0000314"/>
    <property type="project" value="TAIR"/>
</dbReference>
<dbReference type="GO" id="GO:0005524">
    <property type="term" value="F:ATP binding"/>
    <property type="evidence" value="ECO:0007669"/>
    <property type="project" value="UniProtKB-KW"/>
</dbReference>
<dbReference type="GO" id="GO:0016887">
    <property type="term" value="F:ATP hydrolysis activity"/>
    <property type="evidence" value="ECO:0007669"/>
    <property type="project" value="RHEA"/>
</dbReference>
<dbReference type="GO" id="GO:0003677">
    <property type="term" value="F:DNA binding"/>
    <property type="evidence" value="ECO:0007669"/>
    <property type="project" value="UniProtKB-KW"/>
</dbReference>
<dbReference type="GO" id="GO:0003678">
    <property type="term" value="F:DNA helicase activity"/>
    <property type="evidence" value="ECO:0007669"/>
    <property type="project" value="InterPro"/>
</dbReference>
<dbReference type="GO" id="GO:0006310">
    <property type="term" value="P:DNA recombination"/>
    <property type="evidence" value="ECO:0007669"/>
    <property type="project" value="UniProtKB-KW"/>
</dbReference>
<dbReference type="GO" id="GO:0006281">
    <property type="term" value="P:DNA repair"/>
    <property type="evidence" value="ECO:0000315"/>
    <property type="project" value="TAIR"/>
</dbReference>
<dbReference type="GO" id="GO:0000002">
    <property type="term" value="P:mitochondrial genome maintenance"/>
    <property type="evidence" value="ECO:0000315"/>
    <property type="project" value="TAIR"/>
</dbReference>
<dbReference type="CDD" id="cd17992">
    <property type="entry name" value="DEXHc_RecG"/>
    <property type="match status" value="1"/>
</dbReference>
<dbReference type="FunFam" id="3.40.50.300:FF:003123">
    <property type="entry name" value="ATP-dependent DNA helicase homolog RECG, chloroplastic"/>
    <property type="match status" value="1"/>
</dbReference>
<dbReference type="Gene3D" id="3.40.50.300">
    <property type="entry name" value="P-loop containing nucleotide triphosphate hydrolases"/>
    <property type="match status" value="2"/>
</dbReference>
<dbReference type="InterPro" id="IPR004609">
    <property type="entry name" value="ATP-dep_DNA_helicase_RecG"/>
</dbReference>
<dbReference type="InterPro" id="IPR011545">
    <property type="entry name" value="DEAD/DEAH_box_helicase_dom"/>
</dbReference>
<dbReference type="InterPro" id="IPR014001">
    <property type="entry name" value="Helicase_ATP-bd"/>
</dbReference>
<dbReference type="InterPro" id="IPR001650">
    <property type="entry name" value="Helicase_C-like"/>
</dbReference>
<dbReference type="InterPro" id="IPR012340">
    <property type="entry name" value="NA-bd_OB-fold"/>
</dbReference>
<dbReference type="InterPro" id="IPR027417">
    <property type="entry name" value="P-loop_NTPase"/>
</dbReference>
<dbReference type="InterPro" id="IPR047112">
    <property type="entry name" value="RecG/Mfd"/>
</dbReference>
<dbReference type="InterPro" id="IPR045562">
    <property type="entry name" value="RecG_dom3_C"/>
</dbReference>
<dbReference type="NCBIfam" id="TIGR00643">
    <property type="entry name" value="recG"/>
    <property type="match status" value="1"/>
</dbReference>
<dbReference type="PANTHER" id="PTHR47964">
    <property type="entry name" value="ATP-DEPENDENT DNA HELICASE HOMOLOG RECG, CHLOROPLASTIC"/>
    <property type="match status" value="1"/>
</dbReference>
<dbReference type="PANTHER" id="PTHR47964:SF1">
    <property type="entry name" value="ATP-DEPENDENT DNA HELICASE HOMOLOG RECG, CHLOROPLASTIC"/>
    <property type="match status" value="1"/>
</dbReference>
<dbReference type="Pfam" id="PF00270">
    <property type="entry name" value="DEAD"/>
    <property type="match status" value="1"/>
</dbReference>
<dbReference type="Pfam" id="PF00271">
    <property type="entry name" value="Helicase_C"/>
    <property type="match status" value="1"/>
</dbReference>
<dbReference type="Pfam" id="PF19833">
    <property type="entry name" value="RecG_dom3_C"/>
    <property type="match status" value="1"/>
</dbReference>
<dbReference type="SMART" id="SM00487">
    <property type="entry name" value="DEXDc"/>
    <property type="match status" value="1"/>
</dbReference>
<dbReference type="SMART" id="SM00490">
    <property type="entry name" value="HELICc"/>
    <property type="match status" value="1"/>
</dbReference>
<dbReference type="SUPFAM" id="SSF50249">
    <property type="entry name" value="Nucleic acid-binding proteins"/>
    <property type="match status" value="2"/>
</dbReference>
<dbReference type="SUPFAM" id="SSF52540">
    <property type="entry name" value="P-loop containing nucleoside triphosphate hydrolases"/>
    <property type="match status" value="2"/>
</dbReference>
<dbReference type="PROSITE" id="PS51192">
    <property type="entry name" value="HELICASE_ATP_BIND_1"/>
    <property type="match status" value="1"/>
</dbReference>
<dbReference type="PROSITE" id="PS51194">
    <property type="entry name" value="HELICASE_CTER"/>
    <property type="match status" value="1"/>
</dbReference>